<keyword id="KW-0002">3D-structure</keyword>
<keyword id="KW-0963">Cytoplasm</keyword>
<keyword id="KW-0343">GTPase activation</keyword>
<keyword id="KW-0479">Metal-binding</keyword>
<keyword id="KW-0597">Phosphoprotein</keyword>
<keyword id="KW-1267">Proteomics identification</keyword>
<keyword id="KW-1185">Reference proteome</keyword>
<keyword id="KW-0677">Repeat</keyword>
<keyword id="KW-0862">Zinc</keyword>
<keyword id="KW-0863">Zinc-finger</keyword>
<comment type="function">
    <text evidence="1">Phosphatidylinositol 3,4,5-trisphosphate-dependent GTPase-activating protein that modulates actin cytoskeleton remodeling by regulating ARF and RHO family members. Is activated by phosphatidylinositol 3,4,5-trisphosphate (PtdIns(3,4,5)P3) binding. Can be activated by phosphatidylinositol 3,4-bisphosphate (PtdIns(3,4,5)P2) binding, albeit with lower efficiency (By similarity).</text>
</comment>
<comment type="subcellular location">
    <subcellularLocation>
        <location evidence="1">Cytoplasm</location>
    </subcellularLocation>
</comment>
<comment type="tissue specificity">
    <text evidence="9">Detected in brain, thymus, lymph node, thyroid, spinal cord, trachea, heart, skeletal muscle, spleen, kidney, liver, placenta, lung and peripheral blood leukocytes.</text>
</comment>
<comment type="sequence caution" evidence="12">
    <conflict type="frameshift">
        <sequence resource="EMBL-CDS" id="AAL04166"/>
    </conflict>
</comment>
<dbReference type="EMBL" id="AY049733">
    <property type="protein sequence ID" value="AAL12170.1"/>
    <property type="molecule type" value="mRNA"/>
</dbReference>
<dbReference type="EMBL" id="AF439781">
    <property type="protein sequence ID" value="AAL32459.1"/>
    <property type="molecule type" value="mRNA"/>
</dbReference>
<dbReference type="EMBL" id="AC098827">
    <property type="status" value="NOT_ANNOTATED_CDS"/>
    <property type="molecule type" value="Genomic_DNA"/>
</dbReference>
<dbReference type="EMBL" id="AC104078">
    <property type="status" value="NOT_ANNOTATED_CDS"/>
    <property type="molecule type" value="Genomic_DNA"/>
</dbReference>
<dbReference type="EMBL" id="AC108033">
    <property type="protein sequence ID" value="AAY40927.1"/>
    <property type="molecule type" value="Genomic_DNA"/>
</dbReference>
<dbReference type="EMBL" id="AC109818">
    <property type="status" value="NOT_ANNOTATED_CDS"/>
    <property type="molecule type" value="Genomic_DNA"/>
</dbReference>
<dbReference type="EMBL" id="AC116623">
    <property type="status" value="NOT_ANNOTATED_CDS"/>
    <property type="molecule type" value="Genomic_DNA"/>
</dbReference>
<dbReference type="EMBL" id="AB011152">
    <property type="protein sequence ID" value="BAA25506.2"/>
    <property type="molecule type" value="mRNA"/>
</dbReference>
<dbReference type="EMBL" id="AF411982">
    <property type="protein sequence ID" value="AAL04166.1"/>
    <property type="status" value="ALT_FRAME"/>
    <property type="molecule type" value="mRNA"/>
</dbReference>
<dbReference type="CCDS" id="CCDS3441.1"/>
<dbReference type="PIR" id="T00342">
    <property type="entry name" value="T00342"/>
</dbReference>
<dbReference type="RefSeq" id="NP_056045.2">
    <property type="nucleotide sequence ID" value="NM_015230.3"/>
</dbReference>
<dbReference type="RefSeq" id="XP_016863188.1">
    <property type="nucleotide sequence ID" value="XM_017007699.1"/>
</dbReference>
<dbReference type="RefSeq" id="XP_047305527.1">
    <property type="nucleotide sequence ID" value="XM_047449571.1"/>
</dbReference>
<dbReference type="PDB" id="1X40">
    <property type="method" value="NMR"/>
    <property type="chains" value="A=1-78"/>
</dbReference>
<dbReference type="PDB" id="2COD">
    <property type="method" value="NMR"/>
    <property type="chains" value="A=483-584"/>
</dbReference>
<dbReference type="PDBsum" id="1X40"/>
<dbReference type="PDBsum" id="2COD"/>
<dbReference type="BMRB" id="Q8WZ64"/>
<dbReference type="SMR" id="Q8WZ64"/>
<dbReference type="BioGRID" id="125547">
    <property type="interactions" value="33"/>
</dbReference>
<dbReference type="FunCoup" id="Q8WZ64">
    <property type="interactions" value="864"/>
</dbReference>
<dbReference type="IntAct" id="Q8WZ64">
    <property type="interactions" value="17"/>
</dbReference>
<dbReference type="MINT" id="Q8WZ64"/>
<dbReference type="STRING" id="9606.ENSP00000302895"/>
<dbReference type="GlyGen" id="Q8WZ64">
    <property type="glycosylation" value="1 site, 1 O-linked glycan (1 site)"/>
</dbReference>
<dbReference type="iPTMnet" id="Q8WZ64"/>
<dbReference type="PhosphoSitePlus" id="Q8WZ64"/>
<dbReference type="SwissPalm" id="Q8WZ64"/>
<dbReference type="BioMuta" id="ARAP2"/>
<dbReference type="DMDM" id="308153629"/>
<dbReference type="jPOST" id="Q8WZ64"/>
<dbReference type="MassIVE" id="Q8WZ64"/>
<dbReference type="PaxDb" id="9606-ENSP00000302895"/>
<dbReference type="PeptideAtlas" id="Q8WZ64"/>
<dbReference type="ProteomicsDB" id="75223"/>
<dbReference type="Pumba" id="Q8WZ64"/>
<dbReference type="Antibodypedia" id="23290">
    <property type="antibodies" value="94 antibodies from 19 providers"/>
</dbReference>
<dbReference type="DNASU" id="116984"/>
<dbReference type="Ensembl" id="ENST00000303965.9">
    <property type="protein sequence ID" value="ENSP00000302895.4"/>
    <property type="gene ID" value="ENSG00000047365.13"/>
</dbReference>
<dbReference type="GeneID" id="116984"/>
<dbReference type="KEGG" id="hsa:116984"/>
<dbReference type="MANE-Select" id="ENST00000303965.9">
    <property type="protein sequence ID" value="ENSP00000302895.4"/>
    <property type="RefSeq nucleotide sequence ID" value="NM_015230.4"/>
    <property type="RefSeq protein sequence ID" value="NP_056045.2"/>
</dbReference>
<dbReference type="UCSC" id="uc003gsq.3">
    <property type="organism name" value="human"/>
</dbReference>
<dbReference type="AGR" id="HGNC:16924"/>
<dbReference type="CTD" id="116984"/>
<dbReference type="DisGeNET" id="116984"/>
<dbReference type="GeneCards" id="ARAP2"/>
<dbReference type="HGNC" id="HGNC:16924">
    <property type="gene designation" value="ARAP2"/>
</dbReference>
<dbReference type="HPA" id="ENSG00000047365">
    <property type="expression patterns" value="Tissue enhanced (bone)"/>
</dbReference>
<dbReference type="MIM" id="606645">
    <property type="type" value="gene"/>
</dbReference>
<dbReference type="neXtProt" id="NX_Q8WZ64"/>
<dbReference type="OpenTargets" id="ENSG00000047365"/>
<dbReference type="PharmGKB" id="PA164715938"/>
<dbReference type="VEuPathDB" id="HostDB:ENSG00000047365"/>
<dbReference type="eggNOG" id="KOG1117">
    <property type="taxonomic scope" value="Eukaryota"/>
</dbReference>
<dbReference type="GeneTree" id="ENSGT00940000160197"/>
<dbReference type="HOGENOM" id="CLU_002900_1_0_1"/>
<dbReference type="InParanoid" id="Q8WZ64"/>
<dbReference type="OMA" id="FAHSCET"/>
<dbReference type="OrthoDB" id="29546at2759"/>
<dbReference type="PAN-GO" id="Q8WZ64">
    <property type="GO annotations" value="3 GO annotations based on evolutionary models"/>
</dbReference>
<dbReference type="PhylomeDB" id="Q8WZ64"/>
<dbReference type="TreeFam" id="TF105769"/>
<dbReference type="PathwayCommons" id="Q8WZ64"/>
<dbReference type="Reactome" id="R-HSA-8980692">
    <property type="pathway name" value="RHOA GTPase cycle"/>
</dbReference>
<dbReference type="Reactome" id="R-HSA-9013148">
    <property type="pathway name" value="CDC42 GTPase cycle"/>
</dbReference>
<dbReference type="Reactome" id="R-HSA-9013149">
    <property type="pathway name" value="RAC1 GTPase cycle"/>
</dbReference>
<dbReference type="Reactome" id="R-HSA-9013423">
    <property type="pathway name" value="RAC3 GTPase cycle"/>
</dbReference>
<dbReference type="SignaLink" id="Q8WZ64"/>
<dbReference type="SIGNOR" id="Q8WZ64"/>
<dbReference type="BioGRID-ORCS" id="116984">
    <property type="hits" value="14 hits in 1144 CRISPR screens"/>
</dbReference>
<dbReference type="ChiTaRS" id="ARAP2">
    <property type="organism name" value="human"/>
</dbReference>
<dbReference type="EvolutionaryTrace" id="Q8WZ64"/>
<dbReference type="GeneWiki" id="CENTD1"/>
<dbReference type="GenomeRNAi" id="116984"/>
<dbReference type="Pharos" id="Q8WZ64">
    <property type="development level" value="Tbio"/>
</dbReference>
<dbReference type="PRO" id="PR:Q8WZ64"/>
<dbReference type="Proteomes" id="UP000005640">
    <property type="component" value="Chromosome 4"/>
</dbReference>
<dbReference type="RNAct" id="Q8WZ64">
    <property type="molecule type" value="protein"/>
</dbReference>
<dbReference type="Bgee" id="ENSG00000047365">
    <property type="expression patterns" value="Expressed in endothelial cell and 189 other cell types or tissues"/>
</dbReference>
<dbReference type="ExpressionAtlas" id="Q8WZ64">
    <property type="expression patterns" value="baseline and differential"/>
</dbReference>
<dbReference type="GO" id="GO:0005737">
    <property type="term" value="C:cytoplasm"/>
    <property type="evidence" value="ECO:0000318"/>
    <property type="project" value="GO_Central"/>
</dbReference>
<dbReference type="GO" id="GO:0005096">
    <property type="term" value="F:GTPase activator activity"/>
    <property type="evidence" value="ECO:0000318"/>
    <property type="project" value="GO_Central"/>
</dbReference>
<dbReference type="GO" id="GO:0005547">
    <property type="term" value="F:phosphatidylinositol-3,4,5-trisphosphate binding"/>
    <property type="evidence" value="ECO:0000314"/>
    <property type="project" value="UniProtKB"/>
</dbReference>
<dbReference type="GO" id="GO:0008270">
    <property type="term" value="F:zinc ion binding"/>
    <property type="evidence" value="ECO:0007669"/>
    <property type="project" value="UniProtKB-KW"/>
</dbReference>
<dbReference type="GO" id="GO:0032956">
    <property type="term" value="P:regulation of actin cytoskeleton organization"/>
    <property type="evidence" value="ECO:0000318"/>
    <property type="project" value="GO_Central"/>
</dbReference>
<dbReference type="GO" id="GO:0007165">
    <property type="term" value="P:signal transduction"/>
    <property type="evidence" value="ECO:0007669"/>
    <property type="project" value="InterPro"/>
</dbReference>
<dbReference type="CDD" id="cd08856">
    <property type="entry name" value="ArfGap_ARAP2"/>
    <property type="match status" value="1"/>
</dbReference>
<dbReference type="CDD" id="cd13253">
    <property type="entry name" value="PH1_ARAP"/>
    <property type="match status" value="1"/>
</dbReference>
<dbReference type="CDD" id="cd13254">
    <property type="entry name" value="PH2_ARAP"/>
    <property type="match status" value="1"/>
</dbReference>
<dbReference type="CDD" id="cd13256">
    <property type="entry name" value="PH3_ARAP"/>
    <property type="match status" value="1"/>
</dbReference>
<dbReference type="CDD" id="cd13257">
    <property type="entry name" value="PH4_ARAP"/>
    <property type="match status" value="1"/>
</dbReference>
<dbReference type="CDD" id="cd13259">
    <property type="entry name" value="PH5_ARAP"/>
    <property type="match status" value="1"/>
</dbReference>
<dbReference type="CDD" id="cd17227">
    <property type="entry name" value="RA_ARAP2"/>
    <property type="match status" value="1"/>
</dbReference>
<dbReference type="CDD" id="cd04385">
    <property type="entry name" value="RhoGAP_ARAP"/>
    <property type="match status" value="1"/>
</dbReference>
<dbReference type="CDD" id="cd09490">
    <property type="entry name" value="SAM_Arap1_2_3"/>
    <property type="match status" value="1"/>
</dbReference>
<dbReference type="FunFam" id="2.30.29.30:FF:000316">
    <property type="entry name" value="Arf-GAP with Rho-GAP domain, ANK repeat and PH domain-containing protein 2"/>
    <property type="match status" value="1"/>
</dbReference>
<dbReference type="FunFam" id="2.30.29.30:FF:000340">
    <property type="entry name" value="Arf-GAP with Rho-GAP domain, ANK repeat and PH domain-containing protein 2"/>
    <property type="match status" value="1"/>
</dbReference>
<dbReference type="FunFam" id="2.30.29.30:FF:000128">
    <property type="entry name" value="arf-GAP with Rho-GAP domain, ANK repeat and PH domain-containing protein 2"/>
    <property type="match status" value="1"/>
</dbReference>
<dbReference type="FunFam" id="2.30.29.30:FF:000224">
    <property type="entry name" value="arf-GAP with Rho-GAP domain, ANK repeat and PH domain-containing protein 2"/>
    <property type="match status" value="1"/>
</dbReference>
<dbReference type="FunFam" id="1.10.555.10:FF:000019">
    <property type="entry name" value="Arf-GAP with Rho-GAP domain, ANK repeat and PH domain-containing protein 3"/>
    <property type="match status" value="1"/>
</dbReference>
<dbReference type="FunFam" id="1.10.220.150:FF:000006">
    <property type="entry name" value="arf-GAP with Rho-GAP domain, ANK repeat and PH domain-containing protein 3"/>
    <property type="match status" value="1"/>
</dbReference>
<dbReference type="FunFam" id="1.10.150.50:FF:000070">
    <property type="entry name" value="ArfGAP with RhoGAP domain, ankyrin repeat and PH domain 2"/>
    <property type="match status" value="1"/>
</dbReference>
<dbReference type="Gene3D" id="1.10.220.150">
    <property type="entry name" value="Arf GTPase activating protein"/>
    <property type="match status" value="1"/>
</dbReference>
<dbReference type="Gene3D" id="3.10.20.90">
    <property type="entry name" value="Phosphatidylinositol 3-kinase Catalytic Subunit, Chain A, domain 1"/>
    <property type="match status" value="1"/>
</dbReference>
<dbReference type="Gene3D" id="2.30.29.30">
    <property type="entry name" value="Pleckstrin-homology domain (PH domain)/Phosphotyrosine-binding domain (PTB)"/>
    <property type="match status" value="4"/>
</dbReference>
<dbReference type="Gene3D" id="1.10.555.10">
    <property type="entry name" value="Rho GTPase activation protein"/>
    <property type="match status" value="1"/>
</dbReference>
<dbReference type="Gene3D" id="1.10.150.50">
    <property type="entry name" value="Transcription Factor, Ets-1"/>
    <property type="match status" value="1"/>
</dbReference>
<dbReference type="InterPro" id="IPR052227">
    <property type="entry name" value="Arf-Rho-GAP_ANK-PH_domain"/>
</dbReference>
<dbReference type="InterPro" id="IPR037278">
    <property type="entry name" value="ARFGAP/RecO"/>
</dbReference>
<dbReference type="InterPro" id="IPR001164">
    <property type="entry name" value="ArfGAP_dom"/>
</dbReference>
<dbReference type="InterPro" id="IPR038508">
    <property type="entry name" value="ArfGAP_dom_sf"/>
</dbReference>
<dbReference type="InterPro" id="IPR011993">
    <property type="entry name" value="PH-like_dom_sf"/>
</dbReference>
<dbReference type="InterPro" id="IPR001849">
    <property type="entry name" value="PH_domain"/>
</dbReference>
<dbReference type="InterPro" id="IPR000159">
    <property type="entry name" value="RA_dom"/>
</dbReference>
<dbReference type="InterPro" id="IPR008936">
    <property type="entry name" value="Rho_GTPase_activation_prot"/>
</dbReference>
<dbReference type="InterPro" id="IPR037858">
    <property type="entry name" value="RhoGAP_ARAP"/>
</dbReference>
<dbReference type="InterPro" id="IPR000198">
    <property type="entry name" value="RhoGAP_dom"/>
</dbReference>
<dbReference type="InterPro" id="IPR001660">
    <property type="entry name" value="SAM"/>
</dbReference>
<dbReference type="InterPro" id="IPR013761">
    <property type="entry name" value="SAM/pointed_sf"/>
</dbReference>
<dbReference type="PANTHER" id="PTHR45899:SF1">
    <property type="entry name" value="ARF-GAP WITH RHO-GAP DOMAIN, ANK REPEAT AND PH DOMAIN-CONTAINING PROTEIN 2"/>
    <property type="match status" value="1"/>
</dbReference>
<dbReference type="PANTHER" id="PTHR45899">
    <property type="entry name" value="RHO GTPASE ACTIVATING PROTEIN AT 15B, ISOFORM C"/>
    <property type="match status" value="1"/>
</dbReference>
<dbReference type="Pfam" id="PF01412">
    <property type="entry name" value="ArfGap"/>
    <property type="match status" value="1"/>
</dbReference>
<dbReference type="Pfam" id="PF00169">
    <property type="entry name" value="PH"/>
    <property type="match status" value="4"/>
</dbReference>
<dbReference type="Pfam" id="PF00788">
    <property type="entry name" value="RA"/>
    <property type="match status" value="1"/>
</dbReference>
<dbReference type="Pfam" id="PF00620">
    <property type="entry name" value="RhoGAP"/>
    <property type="match status" value="1"/>
</dbReference>
<dbReference type="Pfam" id="PF00536">
    <property type="entry name" value="SAM_1"/>
    <property type="match status" value="1"/>
</dbReference>
<dbReference type="PRINTS" id="PR00405">
    <property type="entry name" value="REVINTRACTNG"/>
</dbReference>
<dbReference type="SMART" id="SM00105">
    <property type="entry name" value="ArfGap"/>
    <property type="match status" value="1"/>
</dbReference>
<dbReference type="SMART" id="SM00233">
    <property type="entry name" value="PH"/>
    <property type="match status" value="5"/>
</dbReference>
<dbReference type="SMART" id="SM00324">
    <property type="entry name" value="RhoGAP"/>
    <property type="match status" value="1"/>
</dbReference>
<dbReference type="SMART" id="SM00454">
    <property type="entry name" value="SAM"/>
    <property type="match status" value="1"/>
</dbReference>
<dbReference type="SUPFAM" id="SSF57863">
    <property type="entry name" value="ArfGap/RecO-like zinc finger"/>
    <property type="match status" value="1"/>
</dbReference>
<dbReference type="SUPFAM" id="SSF48350">
    <property type="entry name" value="GTPase activation domain, GAP"/>
    <property type="match status" value="1"/>
</dbReference>
<dbReference type="SUPFAM" id="SSF50729">
    <property type="entry name" value="PH domain-like"/>
    <property type="match status" value="5"/>
</dbReference>
<dbReference type="SUPFAM" id="SSF47769">
    <property type="entry name" value="SAM/Pointed domain"/>
    <property type="match status" value="1"/>
</dbReference>
<dbReference type="PROSITE" id="PS50115">
    <property type="entry name" value="ARFGAP"/>
    <property type="match status" value="1"/>
</dbReference>
<dbReference type="PROSITE" id="PS50003">
    <property type="entry name" value="PH_DOMAIN"/>
    <property type="match status" value="4"/>
</dbReference>
<dbReference type="PROSITE" id="PS50200">
    <property type="entry name" value="RA"/>
    <property type="match status" value="1"/>
</dbReference>
<dbReference type="PROSITE" id="PS50238">
    <property type="entry name" value="RHOGAP"/>
    <property type="match status" value="1"/>
</dbReference>
<dbReference type="PROSITE" id="PS50105">
    <property type="entry name" value="SAM_DOMAIN"/>
    <property type="match status" value="1"/>
</dbReference>
<accession>Q8WZ64</accession>
<accession>Q4W5D2</accession>
<accession>Q7Z2L5</accession>
<accession>Q96L70</accession>
<accession>Q96P49</accession>
<accession>Q9Y4E4</accession>
<proteinExistence type="evidence at protein level"/>
<reference key="1">
    <citation type="journal article" date="2002" name="Mol. Cell">
        <title>ARAP1: a point of convergence for Arf and Rho signaling.</title>
        <authorList>
            <person name="Miura K."/>
            <person name="Jacques K.M."/>
            <person name="Stauffer S."/>
            <person name="Kubosaki A."/>
            <person name="Zhu K."/>
            <person name="Hirsch D.S."/>
            <person name="Resau J."/>
            <person name="Zheng Y."/>
            <person name="Randazzo P.A."/>
        </authorList>
    </citation>
    <scope>NUCLEOTIDE SEQUENCE [MRNA]</scope>
    <scope>TISSUE SPECIFICITY</scope>
    <scope>VARIANT GLN-1523</scope>
</reference>
<reference key="2">
    <citation type="submission" date="2001-10" db="EMBL/GenBank/DDBJ databases">
        <authorList>
            <person name="Wong J.A."/>
            <person name="Chen Z."/>
            <person name="Marignani P.A."/>
            <person name="Yu M."/>
            <person name="Zhao Y."/>
            <person name="Vallis K.A."/>
        </authorList>
    </citation>
    <scope>NUCLEOTIDE SEQUENCE [MRNA]</scope>
    <scope>VARIANT GLN-1523</scope>
</reference>
<reference key="3">
    <citation type="journal article" date="2005" name="Nature">
        <title>Generation and annotation of the DNA sequences of human chromosomes 2 and 4.</title>
        <authorList>
            <person name="Hillier L.W."/>
            <person name="Graves T.A."/>
            <person name="Fulton R.S."/>
            <person name="Fulton L.A."/>
            <person name="Pepin K.H."/>
            <person name="Minx P."/>
            <person name="Wagner-McPherson C."/>
            <person name="Layman D."/>
            <person name="Wylie K."/>
            <person name="Sekhon M."/>
            <person name="Becker M.C."/>
            <person name="Fewell G.A."/>
            <person name="Delehaunty K.D."/>
            <person name="Miner T.L."/>
            <person name="Nash W.E."/>
            <person name="Kremitzki C."/>
            <person name="Oddy L."/>
            <person name="Du H."/>
            <person name="Sun H."/>
            <person name="Bradshaw-Cordum H."/>
            <person name="Ali J."/>
            <person name="Carter J."/>
            <person name="Cordes M."/>
            <person name="Harris A."/>
            <person name="Isak A."/>
            <person name="van Brunt A."/>
            <person name="Nguyen C."/>
            <person name="Du F."/>
            <person name="Courtney L."/>
            <person name="Kalicki J."/>
            <person name="Ozersky P."/>
            <person name="Abbott S."/>
            <person name="Armstrong J."/>
            <person name="Belter E.A."/>
            <person name="Caruso L."/>
            <person name="Cedroni M."/>
            <person name="Cotton M."/>
            <person name="Davidson T."/>
            <person name="Desai A."/>
            <person name="Elliott G."/>
            <person name="Erb T."/>
            <person name="Fronick C."/>
            <person name="Gaige T."/>
            <person name="Haakenson W."/>
            <person name="Haglund K."/>
            <person name="Holmes A."/>
            <person name="Harkins R."/>
            <person name="Kim K."/>
            <person name="Kruchowski S.S."/>
            <person name="Strong C.M."/>
            <person name="Grewal N."/>
            <person name="Goyea E."/>
            <person name="Hou S."/>
            <person name="Levy A."/>
            <person name="Martinka S."/>
            <person name="Mead K."/>
            <person name="McLellan M.D."/>
            <person name="Meyer R."/>
            <person name="Randall-Maher J."/>
            <person name="Tomlinson C."/>
            <person name="Dauphin-Kohlberg S."/>
            <person name="Kozlowicz-Reilly A."/>
            <person name="Shah N."/>
            <person name="Swearengen-Shahid S."/>
            <person name="Snider J."/>
            <person name="Strong J.T."/>
            <person name="Thompson J."/>
            <person name="Yoakum M."/>
            <person name="Leonard S."/>
            <person name="Pearman C."/>
            <person name="Trani L."/>
            <person name="Radionenko M."/>
            <person name="Waligorski J.E."/>
            <person name="Wang C."/>
            <person name="Rock S.M."/>
            <person name="Tin-Wollam A.-M."/>
            <person name="Maupin R."/>
            <person name="Latreille P."/>
            <person name="Wendl M.C."/>
            <person name="Yang S.-P."/>
            <person name="Pohl C."/>
            <person name="Wallis J.W."/>
            <person name="Spieth J."/>
            <person name="Bieri T.A."/>
            <person name="Berkowicz N."/>
            <person name="Nelson J.O."/>
            <person name="Osborne J."/>
            <person name="Ding L."/>
            <person name="Meyer R."/>
            <person name="Sabo A."/>
            <person name="Shotland Y."/>
            <person name="Sinha P."/>
            <person name="Wohldmann P.E."/>
            <person name="Cook L.L."/>
            <person name="Hickenbotham M.T."/>
            <person name="Eldred J."/>
            <person name="Williams D."/>
            <person name="Jones T.A."/>
            <person name="She X."/>
            <person name="Ciccarelli F.D."/>
            <person name="Izaurralde E."/>
            <person name="Taylor J."/>
            <person name="Schmutz J."/>
            <person name="Myers R.M."/>
            <person name="Cox D.R."/>
            <person name="Huang X."/>
            <person name="McPherson J.D."/>
            <person name="Mardis E.R."/>
            <person name="Clifton S.W."/>
            <person name="Warren W.C."/>
            <person name="Chinwalla A.T."/>
            <person name="Eddy S.R."/>
            <person name="Marra M.A."/>
            <person name="Ovcharenko I."/>
            <person name="Furey T.S."/>
            <person name="Miller W."/>
            <person name="Eichler E.E."/>
            <person name="Bork P."/>
            <person name="Suyama M."/>
            <person name="Torrents D."/>
            <person name="Waterston R.H."/>
            <person name="Wilson R.K."/>
        </authorList>
    </citation>
    <scope>NUCLEOTIDE SEQUENCE [LARGE SCALE GENOMIC DNA]</scope>
</reference>
<reference key="4">
    <citation type="journal article" date="1998" name="DNA Res.">
        <title>Prediction of the coding sequences of unidentified human genes. IX. The complete sequences of 100 new cDNA clones from brain which can code for large proteins in vitro.</title>
        <authorList>
            <person name="Nagase T."/>
            <person name="Ishikawa K."/>
            <person name="Miyajima N."/>
            <person name="Tanaka A."/>
            <person name="Kotani H."/>
            <person name="Nomura N."/>
            <person name="Ohara O."/>
        </authorList>
    </citation>
    <scope>NUCLEOTIDE SEQUENCE [LARGE SCALE MRNA] OF 74-1704</scope>
    <scope>VARIANT GLN-1523</scope>
    <source>
        <tissue>Brain</tissue>
    </source>
</reference>
<reference key="5">
    <citation type="submission" date="2005-04" db="EMBL/GenBank/DDBJ databases">
        <authorList>
            <person name="Ohara O."/>
            <person name="Nagase T."/>
            <person name="Ishikawa K."/>
        </authorList>
    </citation>
    <scope>SEQUENCE REVISION</scope>
</reference>
<reference key="6">
    <citation type="submission" date="2001-08" db="EMBL/GenBank/DDBJ databases">
        <title>KIAA0580 as a member (centaurin delta1) of ArfGAP-domain centaurin family.</title>
        <authorList>
            <person name="Hong W."/>
        </authorList>
    </citation>
    <scope>NUCLEOTIDE SEQUENCE [MRNA] OF 742-1605</scope>
</reference>
<reference key="7">
    <citation type="submission" date="2005-11" db="PDB data bank">
        <title>Solution structure of the N-terminal PH domain and of the SAM domain of human ARAP2.</title>
        <authorList>
            <consortium name="RIKEN structural genomics initiative (RSGI)"/>
        </authorList>
    </citation>
    <scope>STRUCTURE BY NMR OF 1-78 AND 483-584</scope>
</reference>
<name>ARAP2_HUMAN</name>
<sequence length="1704" mass="193452">MSSVSEVNVDIKDFLMSINLEQYLLHFHESGFTTVKDCAAINDSLLQKIGISPTGHRRRILKQLQIILSKMQDIPIYANVHKTKKNDDPSKDYHVPSSDQNICIELSNSGSVQTSSPPQLETVRKNLEDSDASVERSQYPQSDDKLSPPKRDFPTAEEPHLNLGSLNDSLFGSDNIKIESLITKKTVDHTVEEQQTEKVKLITENLSKLPNADSECLSFVGCSTSGTNSGNGTNGLLEGSPPSPFFKFQGEMIVNDLYVPSSPILAPVRSRSKLVSRPSRSFLLRHRPVPEIPGSTKGVSGSYFRERRNVATSTEKSVAWQNSNEENSSSIFPYGETFLFQRLENSKKRSIKNEFLTQGEALKGEAATATNSFIIKSSIYDNRKEKISEDKVEDIWIPREDKNNFLIDTASESEYSTVEECFQSLRRKNSKASKSRTQKALILDSVNRHSYPLSSTSGNADSSAVSSQAISPYACFYGASAKKVKSGWLDKLSPQGKRMFQKRWVKFDGLSISYYNNEKEMYSKGIIPLSAISTVRVQGDNKFEVVTTQRTFVFRVEKEEERNDWISILLNALKSQSLTSQSQAVVTPEKCGYLELRGYKAKIFTVLSGNSVWLCKNEQDFKSGLGITIIPMNVANVKQVDRTVKQSFEIITPYRSFSFTAETEKEKQDWIEAVQQSIAETLSDYEVAEKIWFNESNRSCADCKAPDPDWASINLCVVICKKCAGQHRSLGPKDSKVRSLKMDASIWSNELIELFIVIGNKRANDFWAGNLQKDEELHMDSPVEKRKNFITQKYKEGKFRKTLLASLTKEELNKALCAAVVKPDVLETMALLFSGADVMCATGDPVHSTPYLLAKKAGQSLQMEFLYHNKFSDFPQHDIHSEGVLSQESSQSTFLCDFLYQAPSAASKLSSEKKLLEETNKKWCVLEGGFLSYYENDKSTTPNGTININEVICLAIHKEDFYLNTGPIFIFEIYLPSERVFLFGAETSQAQRKWTEAIAKHFVPLFAENLTEADYDLIGQLFYKDCHALDQWRKGWFAMDKSSLHFCLQMQEVQGDRMHLRRLQELTISTMVQNGEKLDVLLLVEKGRTLYIHGHTKLDFTVWHTAIEKAAGTDGNALQDQQLSKNDVPIIVNSCIAFVTQYGLGCKYIYQKNGDPLHISELLESFKKDARSFKLRAGKHQLEDVTAVLKSFLSDIDDALLTKELYPYWISALDTQDDKERIKKYGAFIRSLPGVNRATLAAIIEHLYRVQKCSEINHMNAHNLALVFSSCLFQTKGQTSEEVNVIEDLINNYVEIFEVKEDQVKQMDIENSFITKWKDTQVSQAGDLLIEVYVERKEPDCSIIIRISPVMEAEELTNDILAIKNIIPTKGDIWATFEVIENEELERPLHYKENVLEQVLRWSSLAEPGSAYLVVKRFLTADTIKHCSDRSTLGSIKEGILKIKEEPSKILSGNKFQDRYFVLRDGFLFLYKDVKSSKHDKMFSLSSMKFYRGVKKKMKPPTSWGLTAYSEKHHWHLCCDSSRTQTEWMTSIFIAQHEYDIWPPAGKERKRSITKNPKIGGLPLIPIQHEGNATLARKNIESARAELERLRLSEKCDKESVDSSLKERASMVAHCLEHKDDKLRNRPRKHRSFNCLEDTEPEAPLGQPKGHKGLKTLRKTEDRNSKATLDSDHKLPSRVIEELNVVLQRSRTLPKELQDEQILK</sequence>
<evidence type="ECO:0000250" key="1"/>
<evidence type="ECO:0000250" key="2">
    <source>
        <dbReference type="UniProtKB" id="Q8BZ05"/>
    </source>
</evidence>
<evidence type="ECO:0000255" key="3">
    <source>
        <dbReference type="PROSITE-ProRule" id="PRU00145"/>
    </source>
</evidence>
<evidence type="ECO:0000255" key="4">
    <source>
        <dbReference type="PROSITE-ProRule" id="PRU00166"/>
    </source>
</evidence>
<evidence type="ECO:0000255" key="5">
    <source>
        <dbReference type="PROSITE-ProRule" id="PRU00172"/>
    </source>
</evidence>
<evidence type="ECO:0000255" key="6">
    <source>
        <dbReference type="PROSITE-ProRule" id="PRU00184"/>
    </source>
</evidence>
<evidence type="ECO:0000255" key="7">
    <source>
        <dbReference type="PROSITE-ProRule" id="PRU00288"/>
    </source>
</evidence>
<evidence type="ECO:0000256" key="8">
    <source>
        <dbReference type="SAM" id="MobiDB-lite"/>
    </source>
</evidence>
<evidence type="ECO:0000269" key="9">
    <source>
    </source>
</evidence>
<evidence type="ECO:0000269" key="10">
    <source>
    </source>
</evidence>
<evidence type="ECO:0000269" key="11">
    <source ref="2"/>
</evidence>
<evidence type="ECO:0000305" key="12"/>
<evidence type="ECO:0007829" key="13">
    <source>
        <dbReference type="PDB" id="1X40"/>
    </source>
</evidence>
<evidence type="ECO:0007829" key="14">
    <source>
        <dbReference type="PDB" id="2COD"/>
    </source>
</evidence>
<gene>
    <name type="primary">ARAP2</name>
    <name type="synonym">CENTD1</name>
    <name type="synonym">KIAA0580</name>
</gene>
<protein>
    <recommendedName>
        <fullName>Arf-GAP with Rho-GAP domain, ANK repeat and PH domain-containing protein 2</fullName>
    </recommendedName>
    <alternativeName>
        <fullName>Centaurin-delta-1</fullName>
        <shortName>Cnt-d1</shortName>
    </alternativeName>
    <alternativeName>
        <fullName>Protein PARX</fullName>
    </alternativeName>
</protein>
<feature type="chain" id="PRO_0000074212" description="Arf-GAP with Rho-GAP domain, ANK repeat and PH domain-containing protein 2">
    <location>
        <begin position="1"/>
        <end position="1704"/>
    </location>
</feature>
<feature type="domain" description="SAM" evidence="6">
    <location>
        <begin position="6"/>
        <end position="70"/>
    </location>
</feature>
<feature type="domain" description="PH 1" evidence="3">
    <location>
        <begin position="482"/>
        <end position="574"/>
    </location>
</feature>
<feature type="domain" description="PH 2" evidence="3">
    <location>
        <begin position="587"/>
        <end position="679"/>
    </location>
</feature>
<feature type="domain" description="Arf-GAP" evidence="7">
    <location>
        <begin position="676"/>
        <end position="811"/>
    </location>
</feature>
<feature type="domain" description="PH 3" evidence="3">
    <location>
        <begin position="878"/>
        <end position="1003"/>
    </location>
</feature>
<feature type="domain" description="PH 4" evidence="3">
    <location>
        <begin position="1014"/>
        <end position="1114"/>
    </location>
</feature>
<feature type="domain" description="Rho-GAP" evidence="5">
    <location>
        <begin position="1116"/>
        <end position="1297"/>
    </location>
</feature>
<feature type="domain" description="Ras-associating" evidence="4">
    <location>
        <begin position="1326"/>
        <end position="1420"/>
    </location>
</feature>
<feature type="domain" description="PH 5" evidence="3">
    <location>
        <begin position="1434"/>
        <end position="1537"/>
    </location>
</feature>
<feature type="zinc finger region" description="C4-type" evidence="7">
    <location>
        <begin position="700"/>
        <end position="723"/>
    </location>
</feature>
<feature type="region of interest" description="Disordered" evidence="8">
    <location>
        <begin position="126"/>
        <end position="161"/>
    </location>
</feature>
<feature type="region of interest" description="Disordered" evidence="8">
    <location>
        <begin position="1636"/>
        <end position="1675"/>
    </location>
</feature>
<feature type="compositionally biased region" description="Basic and acidic residues" evidence="8">
    <location>
        <begin position="142"/>
        <end position="160"/>
    </location>
</feature>
<feature type="compositionally biased region" description="Basic and acidic residues" evidence="8">
    <location>
        <begin position="1658"/>
        <end position="1675"/>
    </location>
</feature>
<feature type="site" description="Arginine finger; crucial for GTP hydrolysis by stabilizing the transition state" evidence="5">
    <location>
        <position position="1151"/>
    </location>
</feature>
<feature type="modified residue" description="Phosphotyrosine" evidence="2">
    <location>
        <position position="77"/>
    </location>
</feature>
<feature type="modified residue" description="Phosphoserine" evidence="2">
    <location>
        <position position="1632"/>
    </location>
</feature>
<feature type="sequence variant" id="VAR_055530" description="In dbSNP:rs35468501.">
    <original>K</original>
    <variation>N</variation>
    <location>
        <position position="384"/>
    </location>
</feature>
<feature type="sequence variant" id="VAR_055531" description="In dbSNP:rs35218548.">
    <original>F</original>
    <variation>L</variation>
    <location>
        <position position="1006"/>
    </location>
</feature>
<feature type="sequence variant" id="VAR_027952" description="In dbSNP:rs4833069." evidence="9 10 11">
    <original>R</original>
    <variation>Q</variation>
    <location>
        <position position="1523"/>
    </location>
</feature>
<feature type="sequence conflict" description="In Ref. 2; AAL32459." evidence="12" ref="2">
    <original>T</original>
    <variation>I</variation>
    <location>
        <position position="227"/>
    </location>
</feature>
<feature type="sequence conflict" description="In Ref. 2; AAL32459." evidence="12" ref="2">
    <original>I</original>
    <variation>V</variation>
    <location>
        <position position="532"/>
    </location>
</feature>
<feature type="helix" evidence="13">
    <location>
        <begin position="11"/>
        <end position="16"/>
    </location>
</feature>
<feature type="turn" evidence="13">
    <location>
        <begin position="17"/>
        <end position="19"/>
    </location>
</feature>
<feature type="helix" evidence="13">
    <location>
        <begin position="21"/>
        <end position="23"/>
    </location>
</feature>
<feature type="helix" evidence="13">
    <location>
        <begin position="24"/>
        <end position="30"/>
    </location>
</feature>
<feature type="helix" evidence="13">
    <location>
        <begin position="36"/>
        <end position="40"/>
    </location>
</feature>
<feature type="helix" evidence="13">
    <location>
        <begin position="43"/>
        <end position="49"/>
    </location>
</feature>
<feature type="helix" evidence="13">
    <location>
        <begin position="54"/>
        <end position="70"/>
    </location>
</feature>
<feature type="strand" evidence="14">
    <location>
        <begin position="485"/>
        <end position="491"/>
    </location>
</feature>
<feature type="strand" evidence="14">
    <location>
        <begin position="494"/>
        <end position="498"/>
    </location>
</feature>
<feature type="strand" evidence="14">
    <location>
        <begin position="501"/>
        <end position="507"/>
    </location>
</feature>
<feature type="strand" evidence="14">
    <location>
        <begin position="509"/>
        <end position="518"/>
    </location>
</feature>
<feature type="strand" evidence="14">
    <location>
        <begin position="526"/>
        <end position="528"/>
    </location>
</feature>
<feature type="turn" evidence="14">
    <location>
        <begin position="529"/>
        <end position="531"/>
    </location>
</feature>
<feature type="strand" evidence="14">
    <location>
        <begin position="532"/>
        <end position="538"/>
    </location>
</feature>
<feature type="turn" evidence="14">
    <location>
        <begin position="539"/>
        <end position="541"/>
    </location>
</feature>
<feature type="strand" evidence="14">
    <location>
        <begin position="542"/>
        <end position="549"/>
    </location>
</feature>
<feature type="strand" evidence="14">
    <location>
        <begin position="552"/>
        <end position="555"/>
    </location>
</feature>
<feature type="helix" evidence="14">
    <location>
        <begin position="559"/>
        <end position="576"/>
    </location>
</feature>
<organism>
    <name type="scientific">Homo sapiens</name>
    <name type="common">Human</name>
    <dbReference type="NCBI Taxonomy" id="9606"/>
    <lineage>
        <taxon>Eukaryota</taxon>
        <taxon>Metazoa</taxon>
        <taxon>Chordata</taxon>
        <taxon>Craniata</taxon>
        <taxon>Vertebrata</taxon>
        <taxon>Euteleostomi</taxon>
        <taxon>Mammalia</taxon>
        <taxon>Eutheria</taxon>
        <taxon>Euarchontoglires</taxon>
        <taxon>Primates</taxon>
        <taxon>Haplorrhini</taxon>
        <taxon>Catarrhini</taxon>
        <taxon>Hominidae</taxon>
        <taxon>Homo</taxon>
    </lineage>
</organism>